<proteinExistence type="inferred from homology"/>
<organism>
    <name type="scientific">Paenarthrobacter aurescens (strain TC1)</name>
    <dbReference type="NCBI Taxonomy" id="290340"/>
    <lineage>
        <taxon>Bacteria</taxon>
        <taxon>Bacillati</taxon>
        <taxon>Actinomycetota</taxon>
        <taxon>Actinomycetes</taxon>
        <taxon>Micrococcales</taxon>
        <taxon>Micrococcaceae</taxon>
        <taxon>Paenarthrobacter</taxon>
    </lineage>
</organism>
<feature type="chain" id="PRO_0000333972" description="Cell division protein SepF">
    <location>
        <begin position="1"/>
        <end position="178"/>
    </location>
</feature>
<feature type="region of interest" description="Disordered" evidence="2">
    <location>
        <begin position="21"/>
        <end position="65"/>
    </location>
</feature>
<feature type="compositionally biased region" description="Basic and acidic residues" evidence="2">
    <location>
        <begin position="21"/>
        <end position="46"/>
    </location>
</feature>
<accession>A1R5G4</accession>
<sequence>MAGALRKTMIYLGLADGDEHYESEQSVATHHDEERPQAQEREERRAPAPVREVVREMPTVDAEEEYRAPVTPIKRAASSREDASGLRQITTVHPRSYNDAKVIGESFRDGIPVIMNVTDMGEADAKRLVDFSAGLVFGLHGSIERVTNKVFLLSPSYVEVIGDDKKASETQASFFNQS</sequence>
<comment type="function">
    <text evidence="1">Cell division protein that is part of the divisome complex and is recruited early to the Z-ring. Probably stimulates Z-ring formation, perhaps through the cross-linking of FtsZ protofilaments. Its function overlaps with FtsA.</text>
</comment>
<comment type="subunit">
    <text evidence="1">Homodimer. Interacts with FtsZ.</text>
</comment>
<comment type="subcellular location">
    <subcellularLocation>
        <location evidence="1">Cytoplasm</location>
    </subcellularLocation>
    <text evidence="1">Localizes to the division site, in a FtsZ-dependent manner.</text>
</comment>
<comment type="similarity">
    <text evidence="1">Belongs to the SepF family.</text>
</comment>
<name>SEPF_PAEAT</name>
<keyword id="KW-0131">Cell cycle</keyword>
<keyword id="KW-0132">Cell division</keyword>
<keyword id="KW-0963">Cytoplasm</keyword>
<keyword id="KW-0717">Septation</keyword>
<evidence type="ECO:0000255" key="1">
    <source>
        <dbReference type="HAMAP-Rule" id="MF_01197"/>
    </source>
</evidence>
<evidence type="ECO:0000256" key="2">
    <source>
        <dbReference type="SAM" id="MobiDB-lite"/>
    </source>
</evidence>
<protein>
    <recommendedName>
        <fullName evidence="1">Cell division protein SepF</fullName>
    </recommendedName>
</protein>
<dbReference type="EMBL" id="CP000474">
    <property type="protein sequence ID" value="ABM07178.1"/>
    <property type="molecule type" value="Genomic_DNA"/>
</dbReference>
<dbReference type="RefSeq" id="WP_011774422.1">
    <property type="nucleotide sequence ID" value="NC_008711.1"/>
</dbReference>
<dbReference type="SMR" id="A1R5G4"/>
<dbReference type="STRING" id="290340.AAur_1716"/>
<dbReference type="KEGG" id="aau:AAur_1716"/>
<dbReference type="eggNOG" id="COG1799">
    <property type="taxonomic scope" value="Bacteria"/>
</dbReference>
<dbReference type="HOGENOM" id="CLU_078499_0_0_11"/>
<dbReference type="OrthoDB" id="3731101at2"/>
<dbReference type="Proteomes" id="UP000000637">
    <property type="component" value="Chromosome"/>
</dbReference>
<dbReference type="GO" id="GO:0005737">
    <property type="term" value="C:cytoplasm"/>
    <property type="evidence" value="ECO:0007669"/>
    <property type="project" value="UniProtKB-SubCell"/>
</dbReference>
<dbReference type="GO" id="GO:0000917">
    <property type="term" value="P:division septum assembly"/>
    <property type="evidence" value="ECO:0007669"/>
    <property type="project" value="UniProtKB-KW"/>
</dbReference>
<dbReference type="GO" id="GO:0043093">
    <property type="term" value="P:FtsZ-dependent cytokinesis"/>
    <property type="evidence" value="ECO:0007669"/>
    <property type="project" value="UniProtKB-UniRule"/>
</dbReference>
<dbReference type="Gene3D" id="3.30.110.150">
    <property type="entry name" value="SepF-like protein"/>
    <property type="match status" value="1"/>
</dbReference>
<dbReference type="HAMAP" id="MF_01197">
    <property type="entry name" value="SepF"/>
    <property type="match status" value="1"/>
</dbReference>
<dbReference type="InterPro" id="IPR023052">
    <property type="entry name" value="Cell_div_SepF"/>
</dbReference>
<dbReference type="InterPro" id="IPR007561">
    <property type="entry name" value="Cell_div_SepF/SepF-rel"/>
</dbReference>
<dbReference type="InterPro" id="IPR038594">
    <property type="entry name" value="SepF-like_sf"/>
</dbReference>
<dbReference type="PANTHER" id="PTHR35798">
    <property type="entry name" value="CELL DIVISION PROTEIN SEPF"/>
    <property type="match status" value="1"/>
</dbReference>
<dbReference type="PANTHER" id="PTHR35798:SF1">
    <property type="entry name" value="CELL DIVISION PROTEIN SEPF"/>
    <property type="match status" value="1"/>
</dbReference>
<dbReference type="Pfam" id="PF04472">
    <property type="entry name" value="SepF"/>
    <property type="match status" value="1"/>
</dbReference>
<reference key="1">
    <citation type="journal article" date="2006" name="PLoS Genet.">
        <title>Secrets of soil survival revealed by the genome sequence of Arthrobacter aurescens TC1.</title>
        <authorList>
            <person name="Mongodin E.F."/>
            <person name="Shapir N."/>
            <person name="Daugherty S.C."/>
            <person name="DeBoy R.T."/>
            <person name="Emerson J.B."/>
            <person name="Shvartzbeyn A."/>
            <person name="Radune D."/>
            <person name="Vamathevan J."/>
            <person name="Riggs F."/>
            <person name="Grinberg V."/>
            <person name="Khouri H.M."/>
            <person name="Wackett L.P."/>
            <person name="Nelson K.E."/>
            <person name="Sadowsky M.J."/>
        </authorList>
    </citation>
    <scope>NUCLEOTIDE SEQUENCE [LARGE SCALE GENOMIC DNA]</scope>
    <source>
        <strain>TC1</strain>
    </source>
</reference>
<gene>
    <name evidence="1" type="primary">sepF</name>
    <name type="ordered locus">AAur_1716</name>
</gene>